<comment type="catalytic activity">
    <reaction evidence="1">
        <text>D-erythro-1-(imidazol-4-yl)glycerol 3-phosphate = 3-(imidazol-4-yl)-2-oxopropyl phosphate + H2O</text>
        <dbReference type="Rhea" id="RHEA:11040"/>
        <dbReference type="ChEBI" id="CHEBI:15377"/>
        <dbReference type="ChEBI" id="CHEBI:57766"/>
        <dbReference type="ChEBI" id="CHEBI:58278"/>
        <dbReference type="EC" id="4.2.1.19"/>
    </reaction>
</comment>
<comment type="pathway">
    <text evidence="1">Amino-acid biosynthesis; L-histidine biosynthesis; L-histidine from 5-phospho-alpha-D-ribose 1-diphosphate: step 6/9.</text>
</comment>
<comment type="subcellular location">
    <subcellularLocation>
        <location evidence="1">Cytoplasm</location>
    </subcellularLocation>
</comment>
<comment type="similarity">
    <text evidence="1">Belongs to the imidazoleglycerol-phosphate dehydratase family.</text>
</comment>
<gene>
    <name evidence="1" type="primary">hisB</name>
    <name type="ordered locus">BceJ2315_03160</name>
    <name type="ORF">BCAL0314</name>
</gene>
<evidence type="ECO:0000255" key="1">
    <source>
        <dbReference type="HAMAP-Rule" id="MF_00076"/>
    </source>
</evidence>
<protein>
    <recommendedName>
        <fullName evidence="1">Imidazoleglycerol-phosphate dehydratase</fullName>
        <shortName evidence="1">IGPD</shortName>
        <ecNumber evidence="1">4.2.1.19</ecNumber>
    </recommendedName>
</protein>
<proteinExistence type="inferred from homology"/>
<organism>
    <name type="scientific">Burkholderia cenocepacia (strain ATCC BAA-245 / DSM 16553 / LMG 16656 / NCTC 13227 / J2315 / CF5610)</name>
    <name type="common">Burkholderia cepacia (strain J2315)</name>
    <dbReference type="NCBI Taxonomy" id="216591"/>
    <lineage>
        <taxon>Bacteria</taxon>
        <taxon>Pseudomonadati</taxon>
        <taxon>Pseudomonadota</taxon>
        <taxon>Betaproteobacteria</taxon>
        <taxon>Burkholderiales</taxon>
        <taxon>Burkholderiaceae</taxon>
        <taxon>Burkholderia</taxon>
        <taxon>Burkholderia cepacia complex</taxon>
    </lineage>
</organism>
<keyword id="KW-0028">Amino-acid biosynthesis</keyword>
<keyword id="KW-0963">Cytoplasm</keyword>
<keyword id="KW-0368">Histidine biosynthesis</keyword>
<keyword id="KW-0456">Lyase</keyword>
<feature type="chain" id="PRO_1000092677" description="Imidazoleglycerol-phosphate dehydratase">
    <location>
        <begin position="1"/>
        <end position="195"/>
    </location>
</feature>
<reference key="1">
    <citation type="journal article" date="2009" name="J. Bacteriol.">
        <title>The genome of Burkholderia cenocepacia J2315, an epidemic pathogen of cystic fibrosis patients.</title>
        <authorList>
            <person name="Holden M.T."/>
            <person name="Seth-Smith H.M."/>
            <person name="Crossman L.C."/>
            <person name="Sebaihia M."/>
            <person name="Bentley S.D."/>
            <person name="Cerdeno-Tarraga A.M."/>
            <person name="Thomson N.R."/>
            <person name="Bason N."/>
            <person name="Quail M.A."/>
            <person name="Sharp S."/>
            <person name="Cherevach I."/>
            <person name="Churcher C."/>
            <person name="Goodhead I."/>
            <person name="Hauser H."/>
            <person name="Holroyd N."/>
            <person name="Mungall K."/>
            <person name="Scott P."/>
            <person name="Walker D."/>
            <person name="White B."/>
            <person name="Rose H."/>
            <person name="Iversen P."/>
            <person name="Mil-Homens D."/>
            <person name="Rocha E.P."/>
            <person name="Fialho A.M."/>
            <person name="Baldwin A."/>
            <person name="Dowson C."/>
            <person name="Barrell B.G."/>
            <person name="Govan J.R."/>
            <person name="Vandamme P."/>
            <person name="Hart C.A."/>
            <person name="Mahenthiralingam E."/>
            <person name="Parkhill J."/>
        </authorList>
    </citation>
    <scope>NUCLEOTIDE SEQUENCE [LARGE SCALE GENOMIC DNA]</scope>
    <source>
        <strain>ATCC BAA-245 / DSM 16553 / LMG 16656 / NCTC 13227 / J2315 / CF5610</strain>
    </source>
</reference>
<accession>B4E637</accession>
<sequence>MRVAEVVRNTSETQIRVKLDLDGTGQQKLATGVPFLDHMLDQIARHGLVDLEVEAHGDTHIDDHHTVEDVGITLGQAVAKAIGDRKGIRRYGHSYVPLDEALSRVVIDFSGRPGLEFHVPFTRARIGTFDVDLSIEFFRGFVNHAGVTLHIDNLRGINAHHQLETVFKAFGRALRAAVELDERAAGQIPSTKGSL</sequence>
<name>HIS7_BURCJ</name>
<dbReference type="EC" id="4.2.1.19" evidence="1"/>
<dbReference type="EMBL" id="AM747720">
    <property type="protein sequence ID" value="CAR50624.1"/>
    <property type="molecule type" value="Genomic_DNA"/>
</dbReference>
<dbReference type="RefSeq" id="WP_006477126.1">
    <property type="nucleotide sequence ID" value="NC_011000.1"/>
</dbReference>
<dbReference type="SMR" id="B4E637"/>
<dbReference type="GeneID" id="83047209"/>
<dbReference type="KEGG" id="bcj:BCAL0314"/>
<dbReference type="eggNOG" id="COG0131">
    <property type="taxonomic scope" value="Bacteria"/>
</dbReference>
<dbReference type="HOGENOM" id="CLU_044308_2_0_4"/>
<dbReference type="BioCyc" id="BCEN216591:G1G1V-359-MONOMER"/>
<dbReference type="UniPathway" id="UPA00031">
    <property type="reaction ID" value="UER00011"/>
</dbReference>
<dbReference type="Proteomes" id="UP000001035">
    <property type="component" value="Chromosome 1"/>
</dbReference>
<dbReference type="GO" id="GO:0005737">
    <property type="term" value="C:cytoplasm"/>
    <property type="evidence" value="ECO:0007669"/>
    <property type="project" value="UniProtKB-SubCell"/>
</dbReference>
<dbReference type="GO" id="GO:0004424">
    <property type="term" value="F:imidazoleglycerol-phosphate dehydratase activity"/>
    <property type="evidence" value="ECO:0007669"/>
    <property type="project" value="UniProtKB-UniRule"/>
</dbReference>
<dbReference type="GO" id="GO:0000105">
    <property type="term" value="P:L-histidine biosynthetic process"/>
    <property type="evidence" value="ECO:0007669"/>
    <property type="project" value="UniProtKB-UniRule"/>
</dbReference>
<dbReference type="CDD" id="cd07914">
    <property type="entry name" value="IGPD"/>
    <property type="match status" value="1"/>
</dbReference>
<dbReference type="FunFam" id="3.30.230.40:FF:000002">
    <property type="entry name" value="Imidazoleglycerol-phosphate dehydratase"/>
    <property type="match status" value="1"/>
</dbReference>
<dbReference type="FunFam" id="3.30.230.40:FF:000003">
    <property type="entry name" value="Imidazoleglycerol-phosphate dehydratase HisB"/>
    <property type="match status" value="1"/>
</dbReference>
<dbReference type="Gene3D" id="3.30.230.40">
    <property type="entry name" value="Imidazole glycerol phosphate dehydratase, domain 1"/>
    <property type="match status" value="2"/>
</dbReference>
<dbReference type="HAMAP" id="MF_00076">
    <property type="entry name" value="HisB"/>
    <property type="match status" value="1"/>
</dbReference>
<dbReference type="InterPro" id="IPR038494">
    <property type="entry name" value="IGPD_sf"/>
</dbReference>
<dbReference type="InterPro" id="IPR000807">
    <property type="entry name" value="ImidazoleglycerolP_deHydtase"/>
</dbReference>
<dbReference type="InterPro" id="IPR020565">
    <property type="entry name" value="ImidazoleglycerP_deHydtase_CS"/>
</dbReference>
<dbReference type="InterPro" id="IPR020568">
    <property type="entry name" value="Ribosomal_Su5_D2-typ_SF"/>
</dbReference>
<dbReference type="NCBIfam" id="NF002106">
    <property type="entry name" value="PRK00951.1-1"/>
    <property type="match status" value="1"/>
</dbReference>
<dbReference type="NCBIfam" id="NF002109">
    <property type="entry name" value="PRK00951.1-5"/>
    <property type="match status" value="1"/>
</dbReference>
<dbReference type="NCBIfam" id="NF002111">
    <property type="entry name" value="PRK00951.2-1"/>
    <property type="match status" value="1"/>
</dbReference>
<dbReference type="NCBIfam" id="NF002114">
    <property type="entry name" value="PRK00951.2-4"/>
    <property type="match status" value="1"/>
</dbReference>
<dbReference type="PANTHER" id="PTHR23133:SF2">
    <property type="entry name" value="IMIDAZOLEGLYCEROL-PHOSPHATE DEHYDRATASE"/>
    <property type="match status" value="1"/>
</dbReference>
<dbReference type="PANTHER" id="PTHR23133">
    <property type="entry name" value="IMIDAZOLEGLYCEROL-PHOSPHATE DEHYDRATASE HIS7"/>
    <property type="match status" value="1"/>
</dbReference>
<dbReference type="Pfam" id="PF00475">
    <property type="entry name" value="IGPD"/>
    <property type="match status" value="1"/>
</dbReference>
<dbReference type="SUPFAM" id="SSF54211">
    <property type="entry name" value="Ribosomal protein S5 domain 2-like"/>
    <property type="match status" value="2"/>
</dbReference>
<dbReference type="PROSITE" id="PS00954">
    <property type="entry name" value="IGP_DEHYDRATASE_1"/>
    <property type="match status" value="1"/>
</dbReference>
<dbReference type="PROSITE" id="PS00955">
    <property type="entry name" value="IGP_DEHYDRATASE_2"/>
    <property type="match status" value="1"/>
</dbReference>